<comment type="function">
    <text evidence="1">Late protein which is part of a large complex required for early virion morphogenesis. This complex participates in the formation of virosomes and the incorporation of virosomal contents into nascent immature virions (By similarity).</text>
</comment>
<comment type="subcellular location">
    <subcellularLocation>
        <location evidence="1">Virion</location>
    </subcellularLocation>
    <text evidence="1">Localizes to the virion core.</text>
</comment>
<comment type="induction">
    <text>Expressed in the late phase of the viral replicative cycle.</text>
</comment>
<comment type="similarity">
    <text evidence="2">Belongs to the chordopoxvirinae D3 family.</text>
</comment>
<organismHost>
    <name type="scientific">Oryctolagus cuniculus</name>
    <name type="common">Rabbit</name>
    <dbReference type="NCBI Taxonomy" id="9986"/>
</organismHost>
<accession>P25952</accession>
<accession>Q77PB9</accession>
<reference key="1">
    <citation type="journal article" date="1991" name="Virology">
        <title>Sequence and analysis of a portion of the genomes of Shope fibroma virus and malignant rabbit fibroma virus that is important for viral replication in lymphocytes.</title>
        <authorList>
            <person name="Strayer D.S."/>
            <person name="Jerng H.H."/>
            <person name="O'Connor K."/>
        </authorList>
    </citation>
    <scope>NUCLEOTIDE SEQUENCE [GENOMIC DNA]</scope>
</reference>
<reference key="2">
    <citation type="journal article" date="1992" name="Virus Res.">
        <title>Sequence and analysis of the BamHI 'D' fragment of Shope fibroma virus: comparison with similar regions of related poxviruses.</title>
        <authorList>
            <person name="Strayer D.S."/>
            <person name="Jerng H.H."/>
        </authorList>
    </citation>
    <scope>NUCLEOTIDE SEQUENCE [GENOMIC DNA]</scope>
</reference>
<reference key="3">
    <citation type="journal article" date="1999" name="Virology">
        <title>The complete genome sequence of shope (Rabbit) fibroma virus.</title>
        <authorList>
            <person name="Willer D.O."/>
            <person name="McFadden G."/>
            <person name="Evans D.H."/>
        </authorList>
    </citation>
    <scope>NUCLEOTIDE SEQUENCE [LARGE SCALE GENOMIC DNA]</scope>
</reference>
<reference key="4">
    <citation type="journal article" date="1993" name="Proc. Natl. Acad. Sci. U.S.A.">
        <title>Identification of a poxvirus gene encoding a uracil-DNA glycosylase.</title>
        <authorList>
            <person name="Upton C."/>
            <person name="Stuart D.T."/>
            <person name="McFadden G."/>
        </authorList>
    </citation>
    <scope>NUCLEOTIDE SEQUENCE [GENOMIC DNA] OF 202-241</scope>
</reference>
<sequence>MNTTILIHDDDIQVNDLKENKTFLLLSEHNERIIDKLCSCLLPIIFYCDYITSPDDEGTLETRILSSSYMIRDKYVNVEEFITAGLPLSWCVNLPEKAHSTASDSLIIRDVLYYKKDWIRILLIQCPSAIYTDEELLIDPFKLPRHPPELFKNVTLRSYVNGLLFYPTSSPLYALLSHVVTTFIIKHITCVTKHDEKLITTCYDKGRFNAFVYAWYNSQISDDVVENEKVKNLFALVKARI</sequence>
<proteinExistence type="evidence at transcript level"/>
<keyword id="KW-0426">Late protein</keyword>
<keyword id="KW-1185">Reference proteome</keyword>
<keyword id="KW-0946">Virion</keyword>
<feature type="chain" id="PRO_0000099437" description="Core protein D3 homolog">
    <location>
        <begin position="1"/>
        <end position="241"/>
    </location>
</feature>
<organism>
    <name type="scientific">Rabbit fibroma virus (strain Kasza)</name>
    <name type="common">RFV</name>
    <name type="synonym">Shope fibroma virus (strain Kasza)</name>
    <dbReference type="NCBI Taxonomy" id="10272"/>
    <lineage>
        <taxon>Viruses</taxon>
        <taxon>Varidnaviria</taxon>
        <taxon>Bamfordvirae</taxon>
        <taxon>Nucleocytoviricota</taxon>
        <taxon>Pokkesviricetes</taxon>
        <taxon>Chitovirales</taxon>
        <taxon>Poxviridae</taxon>
        <taxon>Chordopoxvirinae</taxon>
        <taxon>Leporipoxvirus</taxon>
        <taxon>Rabbit fibroma virus</taxon>
    </lineage>
</organism>
<name>D3_RFVKA</name>
<protein>
    <recommendedName>
        <fullName>Core protein D3 homolog</fullName>
    </recommendedName>
    <alternativeName>
        <fullName>27 kDa virion core protein</fullName>
    </alternativeName>
</protein>
<gene>
    <name type="ORF">D5R</name>
    <name type="ORF">s078R</name>
</gene>
<dbReference type="EMBL" id="M63902">
    <property type="protein sequence ID" value="AAA47226.1"/>
    <property type="molecule type" value="Genomic_DNA"/>
</dbReference>
<dbReference type="EMBL" id="M74532">
    <property type="status" value="NOT_ANNOTATED_CDS"/>
    <property type="molecule type" value="Genomic_DNA"/>
</dbReference>
<dbReference type="EMBL" id="AF170722">
    <property type="protein sequence ID" value="AAF17960.1"/>
    <property type="molecule type" value="Genomic_DNA"/>
</dbReference>
<dbReference type="PIR" id="C40478">
    <property type="entry name" value="QQVZRC"/>
</dbReference>
<dbReference type="RefSeq" id="NP_051967.1">
    <property type="nucleotide sequence ID" value="NC_001266.1"/>
</dbReference>
<dbReference type="GeneID" id="1486921"/>
<dbReference type="KEGG" id="vg:1486921"/>
<dbReference type="Proteomes" id="UP000000868">
    <property type="component" value="Segment"/>
</dbReference>
<dbReference type="GO" id="GO:0044423">
    <property type="term" value="C:virion component"/>
    <property type="evidence" value="ECO:0007669"/>
    <property type="project" value="UniProtKB-KW"/>
</dbReference>
<dbReference type="InterPro" id="IPR007660">
    <property type="entry name" value="Poxvirus_D3"/>
</dbReference>
<dbReference type="Pfam" id="PF04580">
    <property type="entry name" value="Pox_D3"/>
    <property type="match status" value="1"/>
</dbReference>
<evidence type="ECO:0000250" key="1"/>
<evidence type="ECO:0000305" key="2"/>